<evidence type="ECO:0000256" key="1">
    <source>
        <dbReference type="SAM" id="MobiDB-lite"/>
    </source>
</evidence>
<evidence type="ECO:0000269" key="2">
    <source>
    </source>
</evidence>
<evidence type="ECO:0000269" key="3">
    <source>
    </source>
</evidence>
<evidence type="ECO:0000269" key="4">
    <source>
    </source>
</evidence>
<evidence type="ECO:0000269" key="5">
    <source>
    </source>
</evidence>
<evidence type="ECO:0000269" key="6">
    <source>
    </source>
</evidence>
<evidence type="ECO:0000305" key="7"/>
<evidence type="ECO:0000312" key="8">
    <source>
        <dbReference type="Proteomes" id="UP000001940"/>
    </source>
</evidence>
<evidence type="ECO:0000312" key="9">
    <source>
        <dbReference type="WormBase" id="C38D4.3"/>
    </source>
</evidence>
<organism evidence="8">
    <name type="scientific">Caenorhabditis elegans</name>
    <dbReference type="NCBI Taxonomy" id="6239"/>
    <lineage>
        <taxon>Eukaryota</taxon>
        <taxon>Metazoa</taxon>
        <taxon>Ecdysozoa</taxon>
        <taxon>Nematoda</taxon>
        <taxon>Chromadorea</taxon>
        <taxon>Rhabditida</taxon>
        <taxon>Rhabditina</taxon>
        <taxon>Rhabditomorpha</taxon>
        <taxon>Rhabditoidea</taxon>
        <taxon>Rhabditidae</taxon>
        <taxon>Peloderinae</taxon>
        <taxon>Caenorhabditis</taxon>
    </lineage>
</organism>
<sequence length="1784" mass="200846">MDNENSSIFKSYQGYECWRGEKQIILKDSIGRQLPYIVNFKKNTCQIFDIEWERVTHSFVFPEGCALIDADYFPTEEGKLGILVGVEDPRQSCGAEHFVLALAVDPDSPAMTITHSLEVPSKITVVKTLFSSADMADETQRTVLKLYHRLMTWQHIVAIGCKETQCYLARLVAVETPSSPVITVHSEKKYLINLMNAYVSGSVLQYTLDDGAYREYPTAAVYISALSLMPRSRTLLVGLSMGGILAASLNPSNQMMLLELRHERLVRKIAPLEPEDDPDKFEYFIATVDCSPRHPIMIQLWRGSFKTLEDVDGEEKYDRPSFSVCLEHKILFGERWLAVNPIVTERDHMMLTRKRGTEDSMHNVSQTFGSTSNRNSVLLAYERKKMVIGTEDPNAEPEYIVEAAIFDIDSWYYKRVPGRVSTDGTVLKQCAFLSTIKSNIRSEDVNDIGILTNEATDVSSFSSMVSDADQLFYPSALSFERVFVAKNTRIDWMKIQNIQDTILNKCAVKLPALIRNPEMISSVVMAAGLVRKNILSGSPNSSAAEINELQLSSDQKVLLNVIVYYGKIEEFCQLASRPDISDTLKRELAEWALHEAVDYKRTISDKMVSLFQGRSLALSPLAEESIAQGIKLFRVVYEYLKACSKALKDDRLRNLAHSVICMRNHTKLTSQFINFAIIPVDPIRQQRMKDLHSKRKNMARKNSSSLPVQSVVRKMNRQAPNAQFWNDIPHDEWYPPTPLDLLECLLNVSISESIKRELVVQYVIDWISTSPEDSEHSEKQLALETIKIMTNQMLNVNLEKIYYILDQGKKALTSSKTSDDMRALGEKVFSMKDDEISYEKLWGKDAPMTVTIGKHDLQRFEQRMKMQMEGGKVRLPVLDPESEILYQMFLFENEKFEAMSSEAISSNKLLSAFLPGMIKKDGRGRQKTAKEQEIEISVKKMFERKVQNDDEDMPEVFASVNDKTERKRKSSQFGEDDESSVSSSQYVPPTAKRIQQWKSAVESVANNSSINSITSPDSHQNAEINMMIATPARYYKRHNEEENVQDGFLSPAGNRPPPVSAHNSILKTAKGGQSASRGRIRFRADVPRGADESIEDNGRKGLALNFAILEDEEEETMTIRKSRSMGKHDEEKDSEKNVVDEMEEVKDQEQENDECIESEKTFENQDDFEVLEDTSAPEAANTENGSETPPMEDTFEVRDDDVMPPTDETYLSHLQTDKTGILEEEGEDEDIWDGVQRSFEVQMDEDCEAVPTIDVADDLESKSEEVNEEEVVESEEVQQDAKEPEKTEKRQEEPEPEVMQPVIPEEPQNESLESSIKLQEELQEEPDIVPTGDEDTADKVQEQAVEEDRPPSRNTRSSSVQKSTSQVEDRDPKELVEEERPPSRNTRSASVQKSSNQEKTSESGEVTEEDRPPSRNTRSASVQKSSSKVKDQKPEELIEEDRPPSRNTRSASAQKTVAANKSVLESEIPSRSASRRTRSTSLRNDTVAEPDETSVAMTTRRRTRATSEVVSKQSSEDDGRSTPKTGRTPTKKAAASTSSSRAGSVTRGKKSIIQKMPSPLEVTMEVQEEEEEEAEEERPASRSTRSASVKNTTVDPSSSALASTKRTTSRKRGNSETIDFNQDDKSAPTTPKRGRPAKKDAGSPKVGSKARGTKPKSIFENQEDEEDRSSSPDIEQPATPTRSSKRTARSRANSESIDDDSKQKTPKKKNAAVNEAGTSKQSRSVTRSRASSIDVQQEVEEPTTPKRGRGRPPKTVLENIEEGEEERKETAATPLLRSARRAKQ</sequence>
<name>MEL28_CAEEL</name>
<keyword id="KW-0131">Cell cycle</keyword>
<keyword id="KW-0132">Cell division</keyword>
<keyword id="KW-0137">Centromere</keyword>
<keyword id="KW-0158">Chromosome</keyword>
<keyword id="KW-0238">DNA-binding</keyword>
<keyword id="KW-0995">Kinetochore</keyword>
<keyword id="KW-0469">Meiosis</keyword>
<keyword id="KW-0472">Membrane</keyword>
<keyword id="KW-0498">Mitosis</keyword>
<keyword id="KW-0509">mRNA transport</keyword>
<keyword id="KW-0906">Nuclear pore complex</keyword>
<keyword id="KW-0539">Nucleus</keyword>
<keyword id="KW-0653">Protein transport</keyword>
<keyword id="KW-1185">Reference proteome</keyword>
<keyword id="KW-0811">Translocation</keyword>
<keyword id="KW-0813">Transport</keyword>
<accession>Q18508</accession>
<reference evidence="8" key="1">
    <citation type="journal article" date="1998" name="Science">
        <title>Genome sequence of the nematode C. elegans: a platform for investigating biology.</title>
        <authorList>
            <consortium name="The C. elegans sequencing consortium"/>
        </authorList>
    </citation>
    <scope>NUCLEOTIDE SEQUENCE [LARGE SCALE GENOMIC DNA]</scope>
    <source>
        <strain evidence="8">Bristol N2</strain>
    </source>
</reference>
<reference evidence="7" key="2">
    <citation type="journal article" date="2006" name="Curr. Biol.">
        <title>MEL-28, a novel nuclear-envelope and kinetochore protein essential for zygotic nuclear-envelope assembly in C. elegans.</title>
        <authorList>
            <person name="Galy V."/>
            <person name="Askjaer P."/>
            <person name="Franz C."/>
            <person name="Lopez-Iglesias C."/>
            <person name="Mattaj I.W."/>
        </authorList>
    </citation>
    <scope>FUNCTION</scope>
    <scope>SUBCELLULAR LOCATION</scope>
    <scope>TISSUE SPECIFICITY</scope>
    <scope>DISRUPTION PHENOTYPE</scope>
</reference>
<reference evidence="7" key="3">
    <citation type="journal article" date="2006" name="Curr. Biol.">
        <title>MEL-28 is downstream of the Ran cycle and is required for nuclear-envelope function and chromatin maintenance.</title>
        <authorList>
            <person name="Fernandez A.G."/>
            <person name="Piano F."/>
        </authorList>
    </citation>
    <scope>FUNCTION</scope>
    <scope>SUBCELLULAR LOCATION</scope>
    <scope>DISRUPTION PHENOTYPE</scope>
</reference>
<reference evidence="7" key="4">
    <citation type="journal article" date="2015" name="Cell Rep.">
        <title>Both chromosome decondensation and condensation are dependent on DNA replication in C. elegans embryos.</title>
        <authorList>
            <person name="Sonneville R."/>
            <person name="Craig G."/>
            <person name="Labib K."/>
            <person name="Gartner A."/>
            <person name="Blow J.J."/>
        </authorList>
    </citation>
    <scope>FUNCTION</scope>
    <scope>SUBCELLULAR LOCATION</scope>
    <scope>DISRUPTION PHENOTYPE</scope>
</reference>
<reference evidence="7" key="5">
    <citation type="journal article" date="2016" name="PLoS Genet.">
        <title>Identification of conserved MEL-28/ELYS domains with essential roles in nuclear assembly and chromosome segregation.</title>
        <authorList>
            <person name="Gomez-Saldivar G."/>
            <person name="Fernandez A."/>
            <person name="Hirano Y."/>
            <person name="Mauro M."/>
            <person name="Lai A."/>
            <person name="Ayuso C."/>
            <person name="Haraguchi T."/>
            <person name="Hiraoka Y."/>
            <person name="Piano F."/>
            <person name="Askjaer P."/>
        </authorList>
    </citation>
    <scope>FUNCTION</scope>
    <scope>SUBCELLULAR LOCATION</scope>
    <scope>DEVELOPMENTAL STAGE</scope>
    <scope>MUTAGENESIS OF 409-ASP--PRO-417</scope>
</reference>
<reference key="6">
    <citation type="journal article" date="2022" name="Elife">
        <title>Ndc1 drives nuclear pore complex assembly independent of membrane biogenesis to promote nuclear formation and growth.</title>
        <authorList>
            <person name="Mauro M.S."/>
            <person name="Celma G."/>
            <person name="Zimyanin V."/>
            <person name="Magaj M.M."/>
            <person name="Gibson K.H."/>
            <person name="Redemann S."/>
            <person name="Bahmanyar S."/>
        </authorList>
    </citation>
    <scope>SUBCELLULAR LOCATION</scope>
</reference>
<proteinExistence type="evidence at protein level"/>
<protein>
    <recommendedName>
        <fullName evidence="7">Protein mel-28</fullName>
    </recommendedName>
    <alternativeName>
        <fullName evidence="7">Maternal effect lethal protein 28</fullName>
    </alternativeName>
</protein>
<comment type="function">
    <text evidence="2 3 4 5">Nuclear envelope protein which has essential roles in assembly of nuclear pore complexes and in chromatin maintenance during the cell cycle (PubMed:16950114, PubMed:16950115, PubMed:26166571, PubMed:27341616). Appears to be a stable structural component of the nuclear envelope during interphase (PubMed:16950114, PubMed:16950115). In dividing cells, localizes to kinetochores during early stages of mitosis and then to chromatin during late mitosis (PubMed:16950114, PubMed:27341616). Important for several mitotic processes including chromosome condensation, kinetochore assembly, chromosome segregation and cell-cycle timing (PubMed:16950114, PubMed:16950115, PubMed:26166571, PubMed:27341616). In postmitotic cells, plays a role in the early steps of nuclear pore complex assembly by recruiting the nucleoporins npp-10 and npp-5 to chromatin (PubMed:16950114, PubMed:16950115). Also involved in meiotic chromosome segregation (PubMed:27341616). May function downstream of the Ran GTPase signaling pathway (PubMed:16950115).</text>
</comment>
<comment type="subcellular location">
    <subcellularLocation>
        <location evidence="2 3 5">Nucleus</location>
    </subcellularLocation>
    <subcellularLocation>
        <location evidence="5">Nucleus</location>
        <location evidence="5">Nucleoplasm</location>
    </subcellularLocation>
    <subcellularLocation>
        <location evidence="5 6">Nucleus envelope</location>
    </subcellularLocation>
    <subcellularLocation>
        <location evidence="2 3">Nucleus inner membrane</location>
    </subcellularLocation>
    <subcellularLocation>
        <location evidence="2">Nucleus</location>
        <location evidence="2">Nuclear pore complex</location>
    </subcellularLocation>
    <subcellularLocation>
        <location evidence="2 3 5">Chromosome</location>
    </subcellularLocation>
    <subcellularLocation>
        <location evidence="2 3 5">Chromosome</location>
        <location evidence="2 3 5">Centromere</location>
        <location evidence="2 3 5">Kinetochore</location>
    </subcellularLocation>
    <text evidence="2 3 5">Has a dynamic expression pattern during the cell cycle (PubMed:16950114, PubMed:27341616). During interphase, localizes to nuclear pore complexes and is also found in the nucleoplasm (PubMed:16950114, PubMed:27341616). During early mitosis, localizes to kinetochores in a hcp-3/CENP-A and hcp-4/CENP-C dependent manner (PubMed:16950114, PubMed:16950115, PubMed:27341616). At later stages of mitosis (anaphase), widely distributed on chromatin (PubMed:16950114, PubMed:27341616). During telophase, localizes again to the reforming nuclear envelope (PubMed:16950114, PubMed:27341616).</text>
</comment>
<comment type="tissue specificity">
    <text evidence="2">Ubiquitously expressed (at protein level).</text>
</comment>
<comment type="developmental stage">
    <text evidence="5">Expressed at all stages of development.</text>
</comment>
<comment type="disruption phenotype">
    <text evidence="2 3 4">RNAi-mediated knockdown results in embryonic lethality (PubMed:16950114). Impairs assembly of the nuclear pore complex, the integrity of the nuclear envelope and distribution of the integral nuclear envelope proteins lmn-1, lem-2 and emr-1 and the nuclear pore complex proteins npp-9, npp-10 and npp-1 (PubMed:16950114, PubMed:16950115). Reduces the recruitment of npp-10 and npp-5 to chromatin (PubMed:16950114). Leads to hypercondensation and mispositioning of chromatin, defects in migration and positioning of the pronuclei, dissociation of centrosomes from chromatin, precocious centrosome separation, as well as defects in kinetochore assembly, spindle assembly, chromosome segregation and chromatin distribution in meiosis and mitosis (PubMed:16950114, PubMed:16950115). Impairs mitotic progression and leads to chromatin bridges (PubMed:16950114, PubMed:16950115). Reduces knl-3 localization to the kinetochores (PubMed:16950115). Suppresses the chromosome-decondensation defect in evl-18/cdc-45 mutant embryos (PubMed:26166571).</text>
</comment>
<feature type="chain" id="PRO_0000439084" description="Protein mel-28">
    <location>
        <begin position="1"/>
        <end position="1784"/>
    </location>
</feature>
<feature type="DNA-binding region" description="A.T hook 1" evidence="7">
    <location>
        <begin position="1630"/>
        <end position="1642"/>
    </location>
</feature>
<feature type="DNA-binding region" description="A.T hook 2" evidence="7">
    <location>
        <begin position="1746"/>
        <end position="1758"/>
    </location>
</feature>
<feature type="region of interest" description="Required for nuclear envelope and kinetochore localization" evidence="5">
    <location>
        <begin position="1"/>
        <end position="956"/>
    </location>
</feature>
<feature type="region of interest" description="Required for association with mitotic chromosomes" evidence="5">
    <location>
        <begin position="566"/>
        <end position="778"/>
    </location>
</feature>
<feature type="region of interest" description="Important for nuclear localization" evidence="5">
    <location>
        <begin position="846"/>
        <end position="1071"/>
    </location>
</feature>
<feature type="region of interest" description="Disordered" evidence="1">
    <location>
        <begin position="945"/>
        <end position="994"/>
    </location>
</feature>
<feature type="region of interest" description="Disordered" evidence="1">
    <location>
        <begin position="1115"/>
        <end position="1784"/>
    </location>
</feature>
<feature type="region of interest" description="Chromatin binding" evidence="5">
    <location>
        <begin position="1239"/>
        <end position="1601"/>
    </location>
</feature>
<feature type="region of interest" description="Important for nuclear localization" evidence="5">
    <location>
        <begin position="1601"/>
        <end position="1784"/>
    </location>
</feature>
<feature type="region of interest" description="Required for chromosome segregation, nuclear growth, nucleoplasmic accumulation and cell cycle timing, but not required for nuclear envelope and kinetochore localization" evidence="5">
    <location>
        <begin position="1630"/>
        <end position="1784"/>
    </location>
</feature>
<feature type="compositionally biased region" description="Basic and acidic residues" evidence="1">
    <location>
        <begin position="1126"/>
        <end position="1149"/>
    </location>
</feature>
<feature type="compositionally biased region" description="Acidic residues" evidence="1">
    <location>
        <begin position="1222"/>
        <end position="1232"/>
    </location>
</feature>
<feature type="compositionally biased region" description="Acidic residues" evidence="1">
    <location>
        <begin position="1266"/>
        <end position="1278"/>
    </location>
</feature>
<feature type="compositionally biased region" description="Basic and acidic residues" evidence="1">
    <location>
        <begin position="1279"/>
        <end position="1293"/>
    </location>
</feature>
<feature type="compositionally biased region" description="Low complexity" evidence="1">
    <location>
        <begin position="1297"/>
        <end position="1306"/>
    </location>
</feature>
<feature type="compositionally biased region" description="Acidic residues" evidence="1">
    <location>
        <begin position="1321"/>
        <end position="1336"/>
    </location>
</feature>
<feature type="compositionally biased region" description="Basic and acidic residues" evidence="1">
    <location>
        <begin position="1337"/>
        <end position="1351"/>
    </location>
</feature>
<feature type="compositionally biased region" description="Polar residues" evidence="1">
    <location>
        <begin position="1352"/>
        <end position="1366"/>
    </location>
</feature>
<feature type="compositionally biased region" description="Basic and acidic residues" evidence="1">
    <location>
        <begin position="1367"/>
        <end position="1382"/>
    </location>
</feature>
<feature type="compositionally biased region" description="Polar residues" evidence="1">
    <location>
        <begin position="1383"/>
        <end position="1398"/>
    </location>
</feature>
<feature type="compositionally biased region" description="Basic and acidic residues" evidence="1">
    <location>
        <begin position="1428"/>
        <end position="1444"/>
    </location>
</feature>
<feature type="compositionally biased region" description="Polar residues" evidence="1">
    <location>
        <begin position="1445"/>
        <end position="1459"/>
    </location>
</feature>
<feature type="compositionally biased region" description="Low complexity" evidence="1">
    <location>
        <begin position="1533"/>
        <end position="1546"/>
    </location>
</feature>
<feature type="compositionally biased region" description="Acidic residues" evidence="1">
    <location>
        <begin position="1566"/>
        <end position="1576"/>
    </location>
</feature>
<feature type="compositionally biased region" description="Polar residues" evidence="1">
    <location>
        <begin position="1581"/>
        <end position="1606"/>
    </location>
</feature>
<feature type="compositionally biased region" description="Polar residues" evidence="1">
    <location>
        <begin position="1716"/>
        <end position="1735"/>
    </location>
</feature>
<feature type="mutagenesis site" description="Defects in chromosome segregation in meiosis and mitosis." evidence="5">
    <original>DSWYYKRVP</original>
    <variation>SSWSYKASG</variation>
    <location>
        <begin position="409"/>
        <end position="417"/>
    </location>
</feature>
<gene>
    <name evidence="9" type="primary">mel-28</name>
    <name evidence="9" type="ORF">C38D4.3</name>
</gene>
<dbReference type="EMBL" id="BX284603">
    <property type="protein sequence ID" value="CAA86316.2"/>
    <property type="molecule type" value="Genomic_DNA"/>
</dbReference>
<dbReference type="PIR" id="T19823">
    <property type="entry name" value="T19823"/>
</dbReference>
<dbReference type="RefSeq" id="NP_497987.2">
    <property type="nucleotide sequence ID" value="NM_065586.7"/>
</dbReference>
<dbReference type="FunCoup" id="Q18508">
    <property type="interactions" value="212"/>
</dbReference>
<dbReference type="IntAct" id="Q18508">
    <property type="interactions" value="4"/>
</dbReference>
<dbReference type="STRING" id="6239.C38D4.3.1"/>
<dbReference type="PaxDb" id="6239-C38D4.3"/>
<dbReference type="PeptideAtlas" id="Q18508"/>
<dbReference type="EnsemblMetazoa" id="C38D4.3.1">
    <property type="protein sequence ID" value="C38D4.3.1"/>
    <property type="gene ID" value="WBGene00003210"/>
</dbReference>
<dbReference type="GeneID" id="175634"/>
<dbReference type="KEGG" id="cel:CELE_C38D4.3"/>
<dbReference type="UCSC" id="C38D4.3">
    <property type="organism name" value="c. elegans"/>
</dbReference>
<dbReference type="AGR" id="WB:WBGene00003210"/>
<dbReference type="CTD" id="175634"/>
<dbReference type="WormBase" id="C38D4.3">
    <property type="protein sequence ID" value="CE36378"/>
    <property type="gene ID" value="WBGene00003210"/>
    <property type="gene designation" value="mel-28"/>
</dbReference>
<dbReference type="eggNOG" id="ENOG502TKKA">
    <property type="taxonomic scope" value="Eukaryota"/>
</dbReference>
<dbReference type="HOGENOM" id="CLU_001014_0_0_1"/>
<dbReference type="InParanoid" id="Q18508"/>
<dbReference type="OMA" id="FRVVYEY"/>
<dbReference type="OrthoDB" id="20729at2759"/>
<dbReference type="PRO" id="PR:Q18508"/>
<dbReference type="Proteomes" id="UP000001940">
    <property type="component" value="Chromosome III"/>
</dbReference>
<dbReference type="Bgee" id="WBGene00003210">
    <property type="expression patterns" value="Expressed in adult organism and 4 other cell types or tissues"/>
</dbReference>
<dbReference type="GO" id="GO:0000776">
    <property type="term" value="C:kinetochore"/>
    <property type="evidence" value="ECO:0000314"/>
    <property type="project" value="WormBase"/>
</dbReference>
<dbReference type="GO" id="GO:0005635">
    <property type="term" value="C:nuclear envelope"/>
    <property type="evidence" value="ECO:0000314"/>
    <property type="project" value="WormBase"/>
</dbReference>
<dbReference type="GO" id="GO:0005637">
    <property type="term" value="C:nuclear inner membrane"/>
    <property type="evidence" value="ECO:0007669"/>
    <property type="project" value="UniProtKB-SubCell"/>
</dbReference>
<dbReference type="GO" id="GO:0005643">
    <property type="term" value="C:nuclear pore"/>
    <property type="evidence" value="ECO:0000314"/>
    <property type="project" value="WormBase"/>
</dbReference>
<dbReference type="GO" id="GO:0005654">
    <property type="term" value="C:nucleoplasm"/>
    <property type="evidence" value="ECO:0000314"/>
    <property type="project" value="WormBase"/>
</dbReference>
<dbReference type="GO" id="GO:0003677">
    <property type="term" value="F:DNA binding"/>
    <property type="evidence" value="ECO:0007669"/>
    <property type="project" value="UniProtKB-KW"/>
</dbReference>
<dbReference type="GO" id="GO:0060090">
    <property type="term" value="F:molecular adaptor activity"/>
    <property type="evidence" value="ECO:0000314"/>
    <property type="project" value="WormBase"/>
</dbReference>
<dbReference type="GO" id="GO:0051301">
    <property type="term" value="P:cell division"/>
    <property type="evidence" value="ECO:0007669"/>
    <property type="project" value="UniProtKB-KW"/>
</dbReference>
<dbReference type="GO" id="GO:0051321">
    <property type="term" value="P:meiotic cell cycle"/>
    <property type="evidence" value="ECO:0007669"/>
    <property type="project" value="UniProtKB-KW"/>
</dbReference>
<dbReference type="GO" id="GO:0000070">
    <property type="term" value="P:mitotic sister chromatid segregation"/>
    <property type="evidence" value="ECO:0000315"/>
    <property type="project" value="WormBase"/>
</dbReference>
<dbReference type="GO" id="GO:0051028">
    <property type="term" value="P:mRNA transport"/>
    <property type="evidence" value="ECO:0007669"/>
    <property type="project" value="UniProtKB-KW"/>
</dbReference>
<dbReference type="GO" id="GO:0051292">
    <property type="term" value="P:nuclear pore complex assembly"/>
    <property type="evidence" value="ECO:0000315"/>
    <property type="project" value="WormBase"/>
</dbReference>
<dbReference type="GO" id="GO:0015031">
    <property type="term" value="P:protein transport"/>
    <property type="evidence" value="ECO:0007669"/>
    <property type="project" value="UniProtKB-KW"/>
</dbReference>